<gene>
    <name evidence="5" type="primary">FgAQP3</name>
    <name type="ORF">FG03680</name>
    <name type="ORF">FGRAMPH1_01T13451</name>
</gene>
<accession>V6R6F0</accession>
<evidence type="ECO:0000255" key="1"/>
<evidence type="ECO:0000255" key="2">
    <source>
        <dbReference type="PROSITE-ProRule" id="PRU00498"/>
    </source>
</evidence>
<evidence type="ECO:0000256" key="3">
    <source>
        <dbReference type="SAM" id="MobiDB-lite"/>
    </source>
</evidence>
<evidence type="ECO:0000269" key="4">
    <source>
    </source>
</evidence>
<evidence type="ECO:0000303" key="5">
    <source>
    </source>
</evidence>
<evidence type="ECO:0000305" key="6"/>
<evidence type="ECO:0000305" key="7">
    <source>
    </source>
</evidence>
<dbReference type="EMBL" id="HG970333">
    <property type="protein sequence ID" value="CEF78529.1"/>
    <property type="molecule type" value="Genomic_DNA"/>
</dbReference>
<dbReference type="RefSeq" id="XP_011322016.1">
    <property type="nucleotide sequence ID" value="XM_011323714.1"/>
</dbReference>
<dbReference type="SMR" id="V6R6F0"/>
<dbReference type="FunCoup" id="V6R6F0">
    <property type="interactions" value="255"/>
</dbReference>
<dbReference type="STRING" id="229533.V6R6F0"/>
<dbReference type="KEGG" id="fgr:FGSG_03680"/>
<dbReference type="VEuPathDB" id="FungiDB:FGRAMPH1_01G13451"/>
<dbReference type="eggNOG" id="KOG0223">
    <property type="taxonomic scope" value="Eukaryota"/>
</dbReference>
<dbReference type="HOGENOM" id="CLU_020019_1_4_1"/>
<dbReference type="InParanoid" id="V6R6F0"/>
<dbReference type="OrthoDB" id="104241at110618"/>
<dbReference type="Proteomes" id="UP000070720">
    <property type="component" value="Chromosome 2"/>
</dbReference>
<dbReference type="GO" id="GO:0005886">
    <property type="term" value="C:plasma membrane"/>
    <property type="evidence" value="ECO:0007669"/>
    <property type="project" value="TreeGrafter"/>
</dbReference>
<dbReference type="GO" id="GO:0015250">
    <property type="term" value="F:water channel activity"/>
    <property type="evidence" value="ECO:0007669"/>
    <property type="project" value="TreeGrafter"/>
</dbReference>
<dbReference type="Gene3D" id="1.20.1080.10">
    <property type="entry name" value="Glycerol uptake facilitator protein"/>
    <property type="match status" value="1"/>
</dbReference>
<dbReference type="InterPro" id="IPR023271">
    <property type="entry name" value="Aquaporin-like"/>
</dbReference>
<dbReference type="InterPro" id="IPR034294">
    <property type="entry name" value="Aquaporin_transptr"/>
</dbReference>
<dbReference type="InterPro" id="IPR000425">
    <property type="entry name" value="MIP"/>
</dbReference>
<dbReference type="PANTHER" id="PTHR19139:SF283">
    <property type="entry name" value="AQUAPORIN"/>
    <property type="match status" value="1"/>
</dbReference>
<dbReference type="PANTHER" id="PTHR19139">
    <property type="entry name" value="AQUAPORIN TRANSPORTER"/>
    <property type="match status" value="1"/>
</dbReference>
<dbReference type="Pfam" id="PF00230">
    <property type="entry name" value="MIP"/>
    <property type="match status" value="1"/>
</dbReference>
<dbReference type="PRINTS" id="PR00783">
    <property type="entry name" value="MINTRINSICP"/>
</dbReference>
<dbReference type="SUPFAM" id="SSF81338">
    <property type="entry name" value="Aquaporin-like"/>
    <property type="match status" value="1"/>
</dbReference>
<protein>
    <recommendedName>
        <fullName evidence="5">Probable aquaporin-3</fullName>
    </recommendedName>
</protein>
<reference key="1">
    <citation type="journal article" date="2007" name="Science">
        <title>The Fusarium graminearum genome reveals a link between localized polymorphism and pathogen specialization.</title>
        <authorList>
            <person name="Cuomo C.A."/>
            <person name="Gueldener U."/>
            <person name="Xu J.-R."/>
            <person name="Trail F."/>
            <person name="Turgeon B.G."/>
            <person name="Di Pietro A."/>
            <person name="Walton J.D."/>
            <person name="Ma L.-J."/>
            <person name="Baker S.E."/>
            <person name="Rep M."/>
            <person name="Adam G."/>
            <person name="Antoniw J."/>
            <person name="Baldwin T."/>
            <person name="Calvo S.E."/>
            <person name="Chang Y.-L."/>
            <person name="DeCaprio D."/>
            <person name="Gale L.R."/>
            <person name="Gnerre S."/>
            <person name="Goswami R.S."/>
            <person name="Hammond-Kosack K."/>
            <person name="Harris L.J."/>
            <person name="Hilburn K."/>
            <person name="Kennell J.C."/>
            <person name="Kroken S."/>
            <person name="Magnuson J.K."/>
            <person name="Mannhaupt G."/>
            <person name="Mauceli E.W."/>
            <person name="Mewes H.-W."/>
            <person name="Mitterbauer R."/>
            <person name="Muehlbauer G."/>
            <person name="Muensterkoetter M."/>
            <person name="Nelson D."/>
            <person name="O'Donnell K."/>
            <person name="Ouellet T."/>
            <person name="Qi W."/>
            <person name="Quesneville H."/>
            <person name="Roncero M.I.G."/>
            <person name="Seong K.-Y."/>
            <person name="Tetko I.V."/>
            <person name="Urban M."/>
            <person name="Waalwijk C."/>
            <person name="Ward T.J."/>
            <person name="Yao J."/>
            <person name="Birren B.W."/>
            <person name="Kistler H.C."/>
        </authorList>
    </citation>
    <scope>NUCLEOTIDE SEQUENCE [LARGE SCALE GENOMIC DNA]</scope>
    <source>
        <strain>ATCC MYA-4620 / CBS 123657 / FGSC 9075 / NRRL 31084 / PH-1</strain>
    </source>
</reference>
<reference key="2">
    <citation type="journal article" date="2010" name="Nature">
        <title>Comparative genomics reveals mobile pathogenicity chromosomes in Fusarium.</title>
        <authorList>
            <person name="Ma L.-J."/>
            <person name="van der Does H.C."/>
            <person name="Borkovich K.A."/>
            <person name="Coleman J.J."/>
            <person name="Daboussi M.-J."/>
            <person name="Di Pietro A."/>
            <person name="Dufresne M."/>
            <person name="Freitag M."/>
            <person name="Grabherr M."/>
            <person name="Henrissat B."/>
            <person name="Houterman P.M."/>
            <person name="Kang S."/>
            <person name="Shim W.-B."/>
            <person name="Woloshuk C."/>
            <person name="Xie X."/>
            <person name="Xu J.-R."/>
            <person name="Antoniw J."/>
            <person name="Baker S.E."/>
            <person name="Bluhm B.H."/>
            <person name="Breakspear A."/>
            <person name="Brown D.W."/>
            <person name="Butchko R.A.E."/>
            <person name="Chapman S."/>
            <person name="Coulson R."/>
            <person name="Coutinho P.M."/>
            <person name="Danchin E.G.J."/>
            <person name="Diener A."/>
            <person name="Gale L.R."/>
            <person name="Gardiner D.M."/>
            <person name="Goff S."/>
            <person name="Hammond-Kosack K.E."/>
            <person name="Hilburn K."/>
            <person name="Hua-Van A."/>
            <person name="Jonkers W."/>
            <person name="Kazan K."/>
            <person name="Kodira C.D."/>
            <person name="Koehrsen M."/>
            <person name="Kumar L."/>
            <person name="Lee Y.-H."/>
            <person name="Li L."/>
            <person name="Manners J.M."/>
            <person name="Miranda-Saavedra D."/>
            <person name="Mukherjee M."/>
            <person name="Park G."/>
            <person name="Park J."/>
            <person name="Park S.-Y."/>
            <person name="Proctor R.H."/>
            <person name="Regev A."/>
            <person name="Ruiz-Roldan M.C."/>
            <person name="Sain D."/>
            <person name="Sakthikumar S."/>
            <person name="Sykes S."/>
            <person name="Schwartz D.C."/>
            <person name="Turgeon B.G."/>
            <person name="Wapinski I."/>
            <person name="Yoder O."/>
            <person name="Young S."/>
            <person name="Zeng Q."/>
            <person name="Zhou S."/>
            <person name="Galagan J."/>
            <person name="Cuomo C.A."/>
            <person name="Kistler H.C."/>
            <person name="Rep M."/>
        </authorList>
    </citation>
    <scope>GENOME REANNOTATION</scope>
    <source>
        <strain>ATCC MYA-4620 / CBS 123657 / FGSC 9075 / NRRL 31084 / PH-1</strain>
    </source>
</reference>
<reference key="3">
    <citation type="journal article" date="2015" name="BMC Genomics">
        <title>The completed genome sequence of the pathogenic ascomycete fungus Fusarium graminearum.</title>
        <authorList>
            <person name="King R."/>
            <person name="Urban M."/>
            <person name="Hammond-Kosack M.C.U."/>
            <person name="Hassani-Pak K."/>
            <person name="Hammond-Kosack K.E."/>
        </authorList>
    </citation>
    <scope>NUCLEOTIDE SEQUENCE [LARGE SCALE GENOMIC DNA]</scope>
    <source>
        <strain>ATCC MYA-4620 / CBS 123657 / FGSC 9075 / NRRL 31084 / PH-1</strain>
    </source>
</reference>
<reference key="4">
    <citation type="journal article" date="2018" name="Curr. Genet.">
        <title>Aquaporin1 regulates development, secondary metabolism and stress responses in Fusarium graminearum.</title>
        <authorList>
            <person name="Ding M."/>
            <person name="Li J."/>
            <person name="Fan X."/>
            <person name="He F."/>
            <person name="Yu X."/>
            <person name="Chen L."/>
            <person name="Zou S."/>
            <person name="Liang Y."/>
            <person name="Yu J."/>
        </authorList>
    </citation>
    <scope>IDENTIFICATION</scope>
    <scope>DISRUPTION PHENOTYPE</scope>
    <scope>DOMAIN</scope>
</reference>
<name>AQP3_GIBZE</name>
<sequence>MADTYGMNGHNGHVKDRRSSSMNGRNRLYAQQEPQRTTHLSEFGKHMVAASGEFVGTFLFLYFGYAGNIVAVLQEPISGPNGTLANNTVMYIAMAYGFSLLVNVWTFYRISGGLFNPAVTFGLCLSGQLPWIRALFLFPSQIIAAMCAGGLVNAMFPGSASIANTTLGPNTSIAQGVFLEMFFTAQLVFVVLMLAAEKSRDTFLAPVGIGLALFVALIPGVFVTGGSANPVRSFGCAVGSRDFPGYHWIYWVGPLLGAALAAGYFRLVKMMHYEEANPGQDSPVDV</sequence>
<feature type="chain" id="PRO_0000457433" description="Probable aquaporin-3">
    <location>
        <begin position="1"/>
        <end position="286"/>
    </location>
</feature>
<feature type="topological domain" description="Cytoplasmic" evidence="6">
    <location>
        <begin position="1"/>
        <end position="52"/>
    </location>
</feature>
<feature type="transmembrane region" description="Helical" evidence="1">
    <location>
        <begin position="53"/>
        <end position="73"/>
    </location>
</feature>
<feature type="topological domain" description="Extracellular" evidence="6">
    <location>
        <begin position="74"/>
        <end position="87"/>
    </location>
</feature>
<feature type="transmembrane region" description="Helical" evidence="1">
    <location>
        <begin position="88"/>
        <end position="108"/>
    </location>
</feature>
<feature type="topological domain" description="Cytoplasmic" evidence="6">
    <location>
        <begin position="109"/>
        <end position="135"/>
    </location>
</feature>
<feature type="transmembrane region" description="Helical" evidence="1">
    <location>
        <begin position="136"/>
        <end position="156"/>
    </location>
</feature>
<feature type="topological domain" description="Extracellular" evidence="6">
    <location>
        <begin position="157"/>
        <end position="175"/>
    </location>
</feature>
<feature type="transmembrane region" description="Helical" evidence="1">
    <location>
        <begin position="176"/>
        <end position="196"/>
    </location>
</feature>
<feature type="topological domain" description="Cytoplasmic" evidence="6">
    <location>
        <begin position="197"/>
        <end position="202"/>
    </location>
</feature>
<feature type="transmembrane region" description="Helical" evidence="1">
    <location>
        <begin position="203"/>
        <end position="223"/>
    </location>
</feature>
<feature type="topological domain" description="Extracellular" evidence="6">
    <location>
        <begin position="224"/>
        <end position="244"/>
    </location>
</feature>
<feature type="transmembrane region" description="Helical" evidence="1">
    <location>
        <begin position="245"/>
        <end position="265"/>
    </location>
</feature>
<feature type="topological domain" description="Cytoplasmic" evidence="6">
    <location>
        <begin position="266"/>
        <end position="286"/>
    </location>
</feature>
<feature type="region of interest" description="Disordered" evidence="3">
    <location>
        <begin position="1"/>
        <end position="34"/>
    </location>
</feature>
<feature type="short sequence motif" description="NPA 1" evidence="7">
    <location>
        <begin position="116"/>
        <end position="118"/>
    </location>
</feature>
<feature type="short sequence motif" description="NPA 2" evidence="7">
    <location>
        <begin position="229"/>
        <end position="231"/>
    </location>
</feature>
<feature type="glycosylation site" description="N-linked (GlcNAc...) asparagine" evidence="2">
    <location>
        <position position="81"/>
    </location>
</feature>
<feature type="glycosylation site" description="N-linked (GlcNAc...) asparagine" evidence="2">
    <location>
        <position position="86"/>
    </location>
</feature>
<feature type="glycosylation site" description="N-linked (GlcNAc...) asparagine" evidence="2">
    <location>
        <position position="164"/>
    </location>
</feature>
<feature type="glycosylation site" description="N-linked (GlcNAc...) asparagine" evidence="2">
    <location>
        <position position="170"/>
    </location>
</feature>
<organism>
    <name type="scientific">Gibberella zeae (strain ATCC MYA-4620 / CBS 123657 / FGSC 9075 / NRRL 31084 / PH-1)</name>
    <name type="common">Wheat head blight fungus</name>
    <name type="synonym">Fusarium graminearum</name>
    <dbReference type="NCBI Taxonomy" id="229533"/>
    <lineage>
        <taxon>Eukaryota</taxon>
        <taxon>Fungi</taxon>
        <taxon>Dikarya</taxon>
        <taxon>Ascomycota</taxon>
        <taxon>Pezizomycotina</taxon>
        <taxon>Sordariomycetes</taxon>
        <taxon>Hypocreomycetidae</taxon>
        <taxon>Hypocreales</taxon>
        <taxon>Nectriaceae</taxon>
        <taxon>Fusarium</taxon>
    </lineage>
</organism>
<keyword id="KW-0325">Glycoprotein</keyword>
<keyword id="KW-0472">Membrane</keyword>
<keyword id="KW-1185">Reference proteome</keyword>
<keyword id="KW-0677">Repeat</keyword>
<keyword id="KW-0812">Transmembrane</keyword>
<keyword id="KW-1133">Transmembrane helix</keyword>
<keyword id="KW-0813">Transport</keyword>
<proteinExistence type="inferred from homology"/>
<comment type="function">
    <text evidence="7">Probable water channel that may have redundant functions with FgAQP5.</text>
</comment>
<comment type="catalytic activity">
    <reaction evidence="7">
        <text>H2O(in) = H2O(out)</text>
        <dbReference type="Rhea" id="RHEA:29667"/>
        <dbReference type="ChEBI" id="CHEBI:15377"/>
    </reaction>
</comment>
<comment type="subcellular location">
    <subcellularLocation>
        <location evidence="1">Membrane</location>
        <topology evidence="1">Multi-pass membrane protein</topology>
    </subcellularLocation>
</comment>
<comment type="domain">
    <text evidence="7">Aquaporins contain two tandem repeats each containing three membrane-spanning domains and a pore-forming loop with the signature motif Asn-Pro-Ala (NPA) (Probable). FgAQP3 has NPA/NPV motifs which is in accordance with the fungal aquaporins (NPx and NxA) (Probable).</text>
</comment>
<comment type="disruption phenotype">
    <text evidence="4">Leads to no variable phenotypes.</text>
</comment>
<comment type="similarity">
    <text evidence="6">Belongs to the MIP/aquaporin (TC 1.A.8) family.</text>
</comment>